<gene>
    <name evidence="6" type="primary">pknE</name>
    <name evidence="8" type="ordered locus">MRA_1754</name>
</gene>
<evidence type="ECO:0000250" key="1">
    <source>
        <dbReference type="UniProtKB" id="P9WI77"/>
    </source>
</evidence>
<evidence type="ECO:0000255" key="2"/>
<evidence type="ECO:0000255" key="3">
    <source>
        <dbReference type="PROSITE-ProRule" id="PRU00159"/>
    </source>
</evidence>
<evidence type="ECO:0000256" key="4">
    <source>
        <dbReference type="SAM" id="MobiDB-lite"/>
    </source>
</evidence>
<evidence type="ECO:0000269" key="5">
    <source>
    </source>
</evidence>
<evidence type="ECO:0000303" key="6">
    <source>
    </source>
</evidence>
<evidence type="ECO:0000305" key="7">
    <source>
    </source>
</evidence>
<evidence type="ECO:0000312" key="8">
    <source>
        <dbReference type="EMBL" id="ABQ73503.1"/>
    </source>
</evidence>
<proteinExistence type="evidence at protein level"/>
<organism>
    <name type="scientific">Mycobacterium tuberculosis (strain ATCC 25177 / H37Ra)</name>
    <dbReference type="NCBI Taxonomy" id="419947"/>
    <lineage>
        <taxon>Bacteria</taxon>
        <taxon>Bacillati</taxon>
        <taxon>Actinomycetota</taxon>
        <taxon>Actinomycetes</taxon>
        <taxon>Mycobacteriales</taxon>
        <taxon>Mycobacteriaceae</taxon>
        <taxon>Mycobacterium</taxon>
        <taxon>Mycobacterium tuberculosis complex</taxon>
    </lineage>
</organism>
<sequence>MDGTAESREGTQFGPYRLRRLVGRGGMGDVYEAEDTVRERIVALKLMSETLSSDPVFRTRMQREARTAGRLQEPHVVPIHDFGEIDGQLYVDMRLINGVDLAAMLRRQGPLAPPRAVAIVRQIGSALDAAHAAGATHRDVKPENILVSADDFAYLVDFGIASATTDEKLTQLGNTVGTLYYMAPERFSESHATYRADIYALTCVLYECLTGSPPYQGDQLSVMGAHINQAIPRPSTVRPGIPVAFDAVIARGMAKNPEDRYVTCGDLSAAAHAALATADQDRATDILRRSQVAKLPVPSTHPVSPGTRWPQPTPWAGGAPPWGPPSSPLPRSARQPWLWVGVAVAVVVALAGGLGIALAHPWRSSGPRTSAPPPPPPADAVELRVLNDGVFVGSSVAPTTIDIFNEPICPPCGSFIRSYASDIDTAVADKQLAVRYHLLNFLDDQSHSKNYSTRAVAASYCVAGQNDPKLYASFYSALFGSDFQPQENAASDRTDAELAHLAQTVGAEPTAISCIKSGADLGTAQTKATNASETLAGFNASGTPFVWDGSMVVNYQDPSWLARLIG</sequence>
<name>PKNE_MYCTA</name>
<feature type="chain" id="PRO_0000458846" description="Serine/threonine-protein kinase PknE">
    <location>
        <begin position="1"/>
        <end position="566"/>
    </location>
</feature>
<feature type="topological domain" description="Cytoplasmic" evidence="2">
    <location>
        <begin position="1"/>
        <end position="337"/>
    </location>
</feature>
<feature type="transmembrane region" description="Helical" evidence="2">
    <location>
        <begin position="338"/>
        <end position="358"/>
    </location>
</feature>
<feature type="topological domain" description="Extracellular" evidence="2">
    <location>
        <begin position="359"/>
        <end position="566"/>
    </location>
</feature>
<feature type="domain" description="Protein kinase" evidence="3">
    <location>
        <begin position="16"/>
        <end position="275"/>
    </location>
</feature>
<feature type="region of interest" description="Disordered" evidence="4">
    <location>
        <begin position="296"/>
        <end position="330"/>
    </location>
</feature>
<feature type="active site" description="Proton acceptor" evidence="3">
    <location>
        <position position="139"/>
    </location>
</feature>
<feature type="binding site" evidence="3">
    <location>
        <begin position="22"/>
        <end position="30"/>
    </location>
    <ligand>
        <name>ATP</name>
        <dbReference type="ChEBI" id="CHEBI:30616"/>
    </ligand>
</feature>
<feature type="binding site" evidence="3">
    <location>
        <position position="45"/>
    </location>
    <ligand>
        <name>ATP</name>
        <dbReference type="ChEBI" id="CHEBI:30616"/>
    </ligand>
</feature>
<feature type="modified residue" description="Phosphoserine; by autocatalysis" evidence="1">
    <location>
        <position position="7"/>
    </location>
</feature>
<feature type="modified residue" description="Phosphothreonine; by autocatalysis" evidence="1">
    <location>
        <position position="11"/>
    </location>
</feature>
<feature type="modified residue" description="Phosphothreonine; by autocatalysis" evidence="1">
    <location>
        <position position="50"/>
    </location>
</feature>
<feature type="modified residue" description="Phosphothreonine; by autocatalysis" evidence="1">
    <location>
        <position position="59"/>
    </location>
</feature>
<feature type="modified residue" description="Phosphothreonine; by autocatalysis" evidence="1">
    <location>
        <position position="170"/>
    </location>
</feature>
<feature type="modified residue" description="Phosphothreonine; by autocatalysis" evidence="1">
    <location>
        <position position="175"/>
    </location>
</feature>
<feature type="modified residue" description="Phosphothreonine; by autocatalysis" evidence="1">
    <location>
        <position position="178"/>
    </location>
</feature>
<feature type="mutagenesis site" description="Loss of kinase activity." evidence="5">
    <original>K</original>
    <variation>M</variation>
    <location>
        <position position="45"/>
    </location>
</feature>
<dbReference type="EC" id="2.7.11.1" evidence="7"/>
<dbReference type="EMBL" id="CP000611">
    <property type="protein sequence ID" value="ABQ73503.1"/>
    <property type="molecule type" value="Genomic_DNA"/>
</dbReference>
<dbReference type="RefSeq" id="WP_003898998.1">
    <property type="nucleotide sequence ID" value="NZ_CP016972.1"/>
</dbReference>
<dbReference type="SMR" id="A5U3A3"/>
<dbReference type="KEGG" id="mra:MRA_1754"/>
<dbReference type="eggNOG" id="COG0515">
    <property type="taxonomic scope" value="Bacteria"/>
</dbReference>
<dbReference type="eggNOG" id="COG1651">
    <property type="taxonomic scope" value="Bacteria"/>
</dbReference>
<dbReference type="HOGENOM" id="CLU_000288_47_0_11"/>
<dbReference type="Proteomes" id="UP000001988">
    <property type="component" value="Chromosome"/>
</dbReference>
<dbReference type="GO" id="GO:0005886">
    <property type="term" value="C:plasma membrane"/>
    <property type="evidence" value="ECO:0007669"/>
    <property type="project" value="UniProtKB-SubCell"/>
</dbReference>
<dbReference type="GO" id="GO:0005524">
    <property type="term" value="F:ATP binding"/>
    <property type="evidence" value="ECO:0007669"/>
    <property type="project" value="UniProtKB-KW"/>
</dbReference>
<dbReference type="GO" id="GO:0004674">
    <property type="term" value="F:protein serine/threonine kinase activity"/>
    <property type="evidence" value="ECO:0007669"/>
    <property type="project" value="UniProtKB-KW"/>
</dbReference>
<dbReference type="CDD" id="cd14014">
    <property type="entry name" value="STKc_PknB_like"/>
    <property type="match status" value="1"/>
</dbReference>
<dbReference type="FunFam" id="1.10.510.10:FF:000021">
    <property type="entry name" value="Serine/threonine protein kinase"/>
    <property type="match status" value="1"/>
</dbReference>
<dbReference type="FunFam" id="3.30.200.20:FF:000348">
    <property type="entry name" value="Serine/threonine protein kinase"/>
    <property type="match status" value="1"/>
</dbReference>
<dbReference type="FunFam" id="3.40.30.10:FF:000373">
    <property type="entry name" value="Transmembrane serine/threonine-protein kinase E"/>
    <property type="match status" value="1"/>
</dbReference>
<dbReference type="Gene3D" id="3.40.30.10">
    <property type="entry name" value="Glutaredoxin"/>
    <property type="match status" value="1"/>
</dbReference>
<dbReference type="Gene3D" id="3.30.200.20">
    <property type="entry name" value="Phosphorylase Kinase, domain 1"/>
    <property type="match status" value="1"/>
</dbReference>
<dbReference type="Gene3D" id="1.10.510.10">
    <property type="entry name" value="Transferase(Phosphotransferase) domain 1"/>
    <property type="match status" value="1"/>
</dbReference>
<dbReference type="InterPro" id="IPR011009">
    <property type="entry name" value="Kinase-like_dom_sf"/>
</dbReference>
<dbReference type="InterPro" id="IPR000719">
    <property type="entry name" value="Prot_kinase_dom"/>
</dbReference>
<dbReference type="InterPro" id="IPR017441">
    <property type="entry name" value="Protein_kinase_ATP_BS"/>
</dbReference>
<dbReference type="InterPro" id="IPR012336">
    <property type="entry name" value="Thioredoxin-like_fold"/>
</dbReference>
<dbReference type="InterPro" id="IPR036249">
    <property type="entry name" value="Thioredoxin-like_sf"/>
</dbReference>
<dbReference type="PANTHER" id="PTHR43289">
    <property type="entry name" value="MITOGEN-ACTIVATED PROTEIN KINASE KINASE KINASE 20-RELATED"/>
    <property type="match status" value="1"/>
</dbReference>
<dbReference type="PANTHER" id="PTHR43289:SF6">
    <property type="entry name" value="SERINE_THREONINE-PROTEIN KINASE NEKL-3"/>
    <property type="match status" value="1"/>
</dbReference>
<dbReference type="Pfam" id="PF00069">
    <property type="entry name" value="Pkinase"/>
    <property type="match status" value="1"/>
</dbReference>
<dbReference type="Pfam" id="PF13462">
    <property type="entry name" value="Thioredoxin_4"/>
    <property type="match status" value="1"/>
</dbReference>
<dbReference type="SMART" id="SM00220">
    <property type="entry name" value="S_TKc"/>
    <property type="match status" value="1"/>
</dbReference>
<dbReference type="SUPFAM" id="SSF56112">
    <property type="entry name" value="Protein kinase-like (PK-like)"/>
    <property type="match status" value="1"/>
</dbReference>
<dbReference type="SUPFAM" id="SSF52833">
    <property type="entry name" value="Thioredoxin-like"/>
    <property type="match status" value="1"/>
</dbReference>
<dbReference type="PROSITE" id="PS00107">
    <property type="entry name" value="PROTEIN_KINASE_ATP"/>
    <property type="match status" value="1"/>
</dbReference>
<dbReference type="PROSITE" id="PS50011">
    <property type="entry name" value="PROTEIN_KINASE_DOM"/>
    <property type="match status" value="1"/>
</dbReference>
<accession>A5U3A3</accession>
<reference evidence="8" key="1">
    <citation type="journal article" date="2008" name="PLoS ONE">
        <title>Genetic basis of virulence attenuation revealed by comparative genomic analysis of Mycobacterium tuberculosis strain H37Ra versus H37Rv.</title>
        <authorList>
            <person name="Zheng H."/>
            <person name="Lu L."/>
            <person name="Wang B."/>
            <person name="Pu S."/>
            <person name="Zhang X."/>
            <person name="Zhu G."/>
            <person name="Shi W."/>
            <person name="Zhang L."/>
            <person name="Wang H."/>
            <person name="Wang S."/>
            <person name="Zhao G."/>
            <person name="Zhang Y."/>
        </authorList>
    </citation>
    <scope>NUCLEOTIDE SEQUENCE [LARGE SCALE GENOMIC DNA]</scope>
    <source>
        <strain>ATCC 25177 / H37Ra</strain>
    </source>
</reference>
<reference key="2">
    <citation type="journal article" date="2014" name="J. Bacteriol.">
        <title>HupB, a nucleoid-associated protein of Mycobacterium tuberculosis, is modified by serine/threonine protein kinases in vivo.</title>
        <authorList>
            <person name="Gupta M."/>
            <person name="Sajid A."/>
            <person name="Sharma K."/>
            <person name="Ghosh S."/>
            <person name="Arora G."/>
            <person name="Singh R."/>
            <person name="Nagaraja V."/>
            <person name="Tandon V."/>
            <person name="Singh Y."/>
        </authorList>
    </citation>
    <scope>FUNCTION</scope>
    <scope>CATALYTIC ACTIVITY</scope>
    <scope>INDUCTION</scope>
    <scope>AUTOPHOSPHORYLATION</scope>
    <scope>MUTAGENESIS OF LYS-45</scope>
    <source>
        <strain>ATCC 25177 / H37Ra</strain>
    </source>
</reference>
<comment type="function">
    <text evidence="1 5">A serine/threonine-protein kinase, acts on HupB in vitro, modifying at least 2 Ser and 8 Thr residues (PubMed:24816602). Important for bacterial survival in the host during infection (By similarity).</text>
</comment>
<comment type="catalytic activity">
    <reaction evidence="5">
        <text>L-seryl-[protein] + ATP = O-phospho-L-seryl-[protein] + ADP + H(+)</text>
        <dbReference type="Rhea" id="RHEA:17989"/>
        <dbReference type="Rhea" id="RHEA-COMP:9863"/>
        <dbReference type="Rhea" id="RHEA-COMP:11604"/>
        <dbReference type="ChEBI" id="CHEBI:15378"/>
        <dbReference type="ChEBI" id="CHEBI:29999"/>
        <dbReference type="ChEBI" id="CHEBI:30616"/>
        <dbReference type="ChEBI" id="CHEBI:83421"/>
        <dbReference type="ChEBI" id="CHEBI:456216"/>
        <dbReference type="EC" id="2.7.11.1"/>
    </reaction>
    <physiologicalReaction direction="left-to-right" evidence="5">
        <dbReference type="Rhea" id="RHEA:17990"/>
    </physiologicalReaction>
</comment>
<comment type="catalytic activity">
    <reaction evidence="5">
        <text>L-threonyl-[protein] + ATP = O-phospho-L-threonyl-[protein] + ADP + H(+)</text>
        <dbReference type="Rhea" id="RHEA:46608"/>
        <dbReference type="Rhea" id="RHEA-COMP:11060"/>
        <dbReference type="Rhea" id="RHEA-COMP:11605"/>
        <dbReference type="ChEBI" id="CHEBI:15378"/>
        <dbReference type="ChEBI" id="CHEBI:30013"/>
        <dbReference type="ChEBI" id="CHEBI:30616"/>
        <dbReference type="ChEBI" id="CHEBI:61977"/>
        <dbReference type="ChEBI" id="CHEBI:456216"/>
        <dbReference type="EC" id="2.7.11.1"/>
    </reaction>
    <physiologicalReaction direction="left-to-right" evidence="5">
        <dbReference type="Rhea" id="RHEA:46609"/>
    </physiologicalReaction>
</comment>
<comment type="subunit">
    <text evidence="1">Homodimer.</text>
</comment>
<comment type="subcellular location">
    <subcellularLocation>
        <location evidence="1">Cell membrane</location>
        <topology evidence="2">Single-pass membrane protein</topology>
    </subcellularLocation>
</comment>
<comment type="induction">
    <text evidence="5">Transcribed at a constant level during all growth phases.</text>
</comment>
<comment type="PTM">
    <text evidence="1 5">Autophosphorylated on serine and threonine residues (PubMed:24816602). Dephosphorylated by PstP (By similarity).</text>
</comment>
<comment type="similarity">
    <text evidence="3">Belongs to the protein kinase superfamily. Ser/Thr protein kinase family.</text>
</comment>
<protein>
    <recommendedName>
        <fullName>Serine/threonine-protein kinase PknE</fullName>
        <ecNumber evidence="7">2.7.11.1</ecNumber>
    </recommendedName>
</protein>
<keyword id="KW-0067">ATP-binding</keyword>
<keyword id="KW-1003">Cell membrane</keyword>
<keyword id="KW-0418">Kinase</keyword>
<keyword id="KW-0472">Membrane</keyword>
<keyword id="KW-0547">Nucleotide-binding</keyword>
<keyword id="KW-0597">Phosphoprotein</keyword>
<keyword id="KW-1185">Reference proteome</keyword>
<keyword id="KW-0723">Serine/threonine-protein kinase</keyword>
<keyword id="KW-0808">Transferase</keyword>
<keyword id="KW-0812">Transmembrane</keyword>
<keyword id="KW-1133">Transmembrane helix</keyword>